<proteinExistence type="evidence at protein level"/>
<comment type="function">
    <text evidence="1 4 6">Histone methyltransferase that specifically monomethylates 'Lys-4' of histone H3 (By similarity). H3 'Lys-4' methylation represents a specific tag for epigenetic transcriptional activation (By similarity). Plays a central role in the transcriptional activation of genes such as collagenase or insulin (PubMed:12711597). Recruited by IPF1/PDX-1 to the insulin promoter, leading to activate transcription (By similarity). Also has methyltransferase activity toward non-histone proteins such as CGAS, p53/TP53, TAF10, and possibly TAF7 by recognizing and binding the [KR]-[STA]-K in substrate proteins (PubMed:35210392). Monomethylates 'Lys-189' of TAF10, leading to increase the affinity of TAF10 for RNA polymerase II (By similarity). Monomethylates 'Lys-372' of p53/TP53, stabilizing p53/TP53 and increasing p53/TP53-mediated transcriptional activation (By similarity). Monomethylates 'Lys-491' of CGAS, promoting interaction between SGF29 and CGAS (PubMed:35210392).</text>
</comment>
<comment type="catalytic activity">
    <reaction evidence="1 3">
        <text>L-lysyl(4)-[histone H3] + S-adenosyl-L-methionine = N(6)-methyl-L-lysyl(4)-[histone H3] + S-adenosyl-L-homocysteine + H(+)</text>
        <dbReference type="Rhea" id="RHEA:60264"/>
        <dbReference type="Rhea" id="RHEA-COMP:15543"/>
        <dbReference type="Rhea" id="RHEA-COMP:15547"/>
        <dbReference type="ChEBI" id="CHEBI:15378"/>
        <dbReference type="ChEBI" id="CHEBI:29969"/>
        <dbReference type="ChEBI" id="CHEBI:57856"/>
        <dbReference type="ChEBI" id="CHEBI:59789"/>
        <dbReference type="ChEBI" id="CHEBI:61929"/>
        <dbReference type="EC" id="2.1.1.364"/>
    </reaction>
</comment>
<comment type="catalytic activity">
    <reaction evidence="6">
        <text>L-lysyl-[protein] + S-adenosyl-L-methionine = N(6)-methyl-L-lysyl-[protein] + S-adenosyl-L-homocysteine + H(+)</text>
        <dbReference type="Rhea" id="RHEA:51736"/>
        <dbReference type="Rhea" id="RHEA-COMP:9752"/>
        <dbReference type="Rhea" id="RHEA-COMP:13053"/>
        <dbReference type="ChEBI" id="CHEBI:15378"/>
        <dbReference type="ChEBI" id="CHEBI:29969"/>
        <dbReference type="ChEBI" id="CHEBI:57856"/>
        <dbReference type="ChEBI" id="CHEBI:59789"/>
        <dbReference type="ChEBI" id="CHEBI:61929"/>
    </reaction>
    <physiologicalReaction direction="left-to-right" evidence="6">
        <dbReference type="Rhea" id="RHEA:51737"/>
    </physiologicalReaction>
</comment>
<comment type="subunit">
    <text evidence="1">Interacts with IPF1/PDX-1.</text>
</comment>
<comment type="subcellular location">
    <subcellularLocation>
        <location evidence="1">Nucleus</location>
    </subcellularLocation>
    <subcellularLocation>
        <location evidence="1">Chromosome</location>
    </subcellularLocation>
</comment>
<comment type="developmental stage">
    <text evidence="5">Expressed during all pre-implementation stages in both male and female embryos.</text>
</comment>
<comment type="domain">
    <text evidence="1">The SET domain is necessary but not sufficient for histone methyltransferase activity.</text>
</comment>
<comment type="similarity">
    <text evidence="3">Belongs to the class V-like SAM-binding methyltransferase superfamily. Histone-lysine methyltransferase family. SET7 subfamily.</text>
</comment>
<comment type="sequence caution" evidence="7">
    <conflict type="erroneous initiation">
        <sequence resource="EMBL-CDS" id="BAC98238"/>
    </conflict>
</comment>
<dbReference type="EC" id="2.1.1.364" evidence="1"/>
<dbReference type="EMBL" id="AF448509">
    <property type="protein sequence ID" value="AAL56578.1"/>
    <property type="molecule type" value="mRNA"/>
</dbReference>
<dbReference type="EMBL" id="AK129428">
    <property type="protein sequence ID" value="BAC98238.1"/>
    <property type="status" value="ALT_INIT"/>
    <property type="molecule type" value="mRNA"/>
</dbReference>
<dbReference type="EMBL" id="AK048924">
    <property type="protein sequence ID" value="BAC33493.1"/>
    <property type="molecule type" value="mRNA"/>
</dbReference>
<dbReference type="EMBL" id="AK147422">
    <property type="protein sequence ID" value="BAE27903.1"/>
    <property type="molecule type" value="mRNA"/>
</dbReference>
<dbReference type="EMBL" id="AK147413">
    <property type="protein sequence ID" value="BAE27897.1"/>
    <property type="molecule type" value="mRNA"/>
</dbReference>
<dbReference type="EMBL" id="AK147667">
    <property type="protein sequence ID" value="BAE28059.1"/>
    <property type="molecule type" value="mRNA"/>
</dbReference>
<dbReference type="EMBL" id="AK170161">
    <property type="protein sequence ID" value="BAE41607.1"/>
    <property type="molecule type" value="mRNA"/>
</dbReference>
<dbReference type="EMBL" id="BC050190">
    <property type="protein sequence ID" value="AAH50190.1"/>
    <property type="molecule type" value="mRNA"/>
</dbReference>
<dbReference type="CCDS" id="CCDS17341.1"/>
<dbReference type="RefSeq" id="NP_542983.3">
    <property type="nucleotide sequence ID" value="NM_080793.5"/>
</dbReference>
<dbReference type="SMR" id="Q8VHL1"/>
<dbReference type="BioGRID" id="215865">
    <property type="interactions" value="6"/>
</dbReference>
<dbReference type="FunCoup" id="Q8VHL1">
    <property type="interactions" value="1518"/>
</dbReference>
<dbReference type="IntAct" id="Q8VHL1">
    <property type="interactions" value="1"/>
</dbReference>
<dbReference type="STRING" id="10090.ENSMUSP00000043492"/>
<dbReference type="iPTMnet" id="Q8VHL1"/>
<dbReference type="PhosphoSitePlus" id="Q8VHL1"/>
<dbReference type="SwissPalm" id="Q8VHL1"/>
<dbReference type="jPOST" id="Q8VHL1"/>
<dbReference type="PaxDb" id="10090-ENSMUSP00000043492"/>
<dbReference type="PeptideAtlas" id="Q8VHL1"/>
<dbReference type="ProteomicsDB" id="261171"/>
<dbReference type="Pumba" id="Q8VHL1"/>
<dbReference type="Antibodypedia" id="16193">
    <property type="antibodies" value="539 antibodies from 40 providers"/>
</dbReference>
<dbReference type="DNASU" id="73251"/>
<dbReference type="Ensembl" id="ENSMUST00000037141.9">
    <property type="protein sequence ID" value="ENSMUSP00000043492.8"/>
    <property type="gene ID" value="ENSMUSG00000037111.10"/>
</dbReference>
<dbReference type="GeneID" id="73251"/>
<dbReference type="KEGG" id="mmu:73251"/>
<dbReference type="UCSC" id="uc008peb.1">
    <property type="organism name" value="mouse"/>
</dbReference>
<dbReference type="AGR" id="MGI:1920501"/>
<dbReference type="CTD" id="80854"/>
<dbReference type="MGI" id="MGI:1920501">
    <property type="gene designation" value="Setd7"/>
</dbReference>
<dbReference type="VEuPathDB" id="HostDB:ENSMUSG00000037111"/>
<dbReference type="eggNOG" id="KOG1079">
    <property type="taxonomic scope" value="Eukaryota"/>
</dbReference>
<dbReference type="GeneTree" id="ENSGT00390000004827"/>
<dbReference type="HOGENOM" id="CLU_803117_0_0_1"/>
<dbReference type="InParanoid" id="Q8VHL1"/>
<dbReference type="OMA" id="HSFIPNC"/>
<dbReference type="OrthoDB" id="294378at2759"/>
<dbReference type="PhylomeDB" id="Q8VHL1"/>
<dbReference type="TreeFam" id="TF106392"/>
<dbReference type="BRENDA" id="2.1.1.364">
    <property type="organism ID" value="3474"/>
</dbReference>
<dbReference type="Reactome" id="R-MMU-3214841">
    <property type="pathway name" value="PKMTs methylate histone lysines"/>
</dbReference>
<dbReference type="BioGRID-ORCS" id="73251">
    <property type="hits" value="3 hits in 83 CRISPR screens"/>
</dbReference>
<dbReference type="ChiTaRS" id="Setd7">
    <property type="organism name" value="mouse"/>
</dbReference>
<dbReference type="PRO" id="PR:Q8VHL1"/>
<dbReference type="Proteomes" id="UP000000589">
    <property type="component" value="Chromosome 3"/>
</dbReference>
<dbReference type="RNAct" id="Q8VHL1">
    <property type="molecule type" value="protein"/>
</dbReference>
<dbReference type="Bgee" id="ENSMUSG00000037111">
    <property type="expression patterns" value="Expressed in triceps brachii and 217 other cell types or tissues"/>
</dbReference>
<dbReference type="GO" id="GO:0005694">
    <property type="term" value="C:chromosome"/>
    <property type="evidence" value="ECO:0007669"/>
    <property type="project" value="UniProtKB-SubCell"/>
</dbReference>
<dbReference type="GO" id="GO:0005730">
    <property type="term" value="C:nucleolus"/>
    <property type="evidence" value="ECO:0007669"/>
    <property type="project" value="Ensembl"/>
</dbReference>
<dbReference type="GO" id="GO:0003682">
    <property type="term" value="F:chromatin binding"/>
    <property type="evidence" value="ECO:0007669"/>
    <property type="project" value="Ensembl"/>
</dbReference>
<dbReference type="GO" id="GO:0140945">
    <property type="term" value="F:histone H3K4 monomethyltransferase activity"/>
    <property type="evidence" value="ECO:0007669"/>
    <property type="project" value="UniProtKB-EC"/>
</dbReference>
<dbReference type="GO" id="GO:0042054">
    <property type="term" value="F:histone methyltransferase activity"/>
    <property type="evidence" value="ECO:0000250"/>
    <property type="project" value="UniProtKB"/>
</dbReference>
<dbReference type="GO" id="GO:0002039">
    <property type="term" value="F:p53 binding"/>
    <property type="evidence" value="ECO:0007669"/>
    <property type="project" value="Ensembl"/>
</dbReference>
<dbReference type="GO" id="GO:0016279">
    <property type="term" value="F:protein-lysine N-methyltransferase activity"/>
    <property type="evidence" value="ECO:0000314"/>
    <property type="project" value="UniProtKB"/>
</dbReference>
<dbReference type="GO" id="GO:0006325">
    <property type="term" value="P:chromatin organization"/>
    <property type="evidence" value="ECO:0000314"/>
    <property type="project" value="MGI"/>
</dbReference>
<dbReference type="GO" id="GO:0006974">
    <property type="term" value="P:DNA damage response"/>
    <property type="evidence" value="ECO:0000266"/>
    <property type="project" value="MGI"/>
</dbReference>
<dbReference type="GO" id="GO:0070828">
    <property type="term" value="P:heterochromatin organization"/>
    <property type="evidence" value="ECO:0000315"/>
    <property type="project" value="MGI"/>
</dbReference>
<dbReference type="GO" id="GO:0018027">
    <property type="term" value="P:peptidyl-lysine dimethylation"/>
    <property type="evidence" value="ECO:0000250"/>
    <property type="project" value="UniProtKB"/>
</dbReference>
<dbReference type="GO" id="GO:0018026">
    <property type="term" value="P:peptidyl-lysine monomethylation"/>
    <property type="evidence" value="ECO:0000250"/>
    <property type="project" value="UniProtKB"/>
</dbReference>
<dbReference type="GO" id="GO:0045893">
    <property type="term" value="P:positive regulation of DNA-templated transcription"/>
    <property type="evidence" value="ECO:0007669"/>
    <property type="project" value="Ensembl"/>
</dbReference>
<dbReference type="GO" id="GO:0006282">
    <property type="term" value="P:regulation of DNA repair"/>
    <property type="evidence" value="ECO:0000314"/>
    <property type="project" value="UniProt"/>
</dbReference>
<dbReference type="GO" id="GO:0045471">
    <property type="term" value="P:response to ethanol"/>
    <property type="evidence" value="ECO:0007669"/>
    <property type="project" value="Ensembl"/>
</dbReference>
<dbReference type="CDD" id="cd10530">
    <property type="entry name" value="SET_SETD7"/>
    <property type="match status" value="1"/>
</dbReference>
<dbReference type="FunFam" id="2.170.270.10:FF:000024">
    <property type="entry name" value="Histone-lysine N-methyltransferase SETD7"/>
    <property type="match status" value="1"/>
</dbReference>
<dbReference type="FunFam" id="2.20.110.10:FF:000004">
    <property type="entry name" value="Histone-lysine N-methyltransferase SETD7"/>
    <property type="match status" value="1"/>
</dbReference>
<dbReference type="FunFam" id="2.20.110.10:FF:000005">
    <property type="entry name" value="Histone-lysine N-methyltransferase SETD7"/>
    <property type="match status" value="1"/>
</dbReference>
<dbReference type="Gene3D" id="2.20.110.10">
    <property type="entry name" value="Histone H3 K4-specific methyltransferase SET7/9 N-terminal domain"/>
    <property type="match status" value="3"/>
</dbReference>
<dbReference type="Gene3D" id="2.170.270.10">
    <property type="entry name" value="SET domain"/>
    <property type="match status" value="1"/>
</dbReference>
<dbReference type="InterPro" id="IPR017155">
    <property type="entry name" value="Hist-Lys_N-MeTrfase_SETD7"/>
</dbReference>
<dbReference type="InterPro" id="IPR003409">
    <property type="entry name" value="MORN"/>
</dbReference>
<dbReference type="InterPro" id="IPR001214">
    <property type="entry name" value="SET_dom"/>
</dbReference>
<dbReference type="InterPro" id="IPR046341">
    <property type="entry name" value="SET_dom_sf"/>
</dbReference>
<dbReference type="InterPro" id="IPR054533">
    <property type="entry name" value="SETD7_N"/>
</dbReference>
<dbReference type="InterPro" id="IPR044436">
    <property type="entry name" value="SETD7_SET"/>
</dbReference>
<dbReference type="PANTHER" id="PTHR46820">
    <property type="entry name" value="HISTONE-LYSINE N-METHYLTRANSFERASE SETD7"/>
    <property type="match status" value="1"/>
</dbReference>
<dbReference type="PANTHER" id="PTHR46820:SF1">
    <property type="entry name" value="HISTONE-LYSINE N-METHYLTRANSFERASE SETD7"/>
    <property type="match status" value="1"/>
</dbReference>
<dbReference type="Pfam" id="PF02493">
    <property type="entry name" value="MORN"/>
    <property type="match status" value="3"/>
</dbReference>
<dbReference type="Pfam" id="PF00856">
    <property type="entry name" value="SET"/>
    <property type="match status" value="1"/>
</dbReference>
<dbReference type="Pfam" id="PF22648">
    <property type="entry name" value="SET7_N"/>
    <property type="match status" value="1"/>
</dbReference>
<dbReference type="PIRSF" id="PIRSF037249">
    <property type="entry name" value="Histone_Lys_mtfrase_SET"/>
    <property type="match status" value="1"/>
</dbReference>
<dbReference type="SUPFAM" id="SSF82185">
    <property type="entry name" value="Histone H3 K4-specific methyltransferase SET7/9 N-terminal domain"/>
    <property type="match status" value="1"/>
</dbReference>
<dbReference type="SUPFAM" id="SSF82199">
    <property type="entry name" value="SET domain"/>
    <property type="match status" value="1"/>
</dbReference>
<dbReference type="PROSITE" id="PS51577">
    <property type="entry name" value="SAM_MT43_SET7"/>
    <property type="match status" value="1"/>
</dbReference>
<dbReference type="PROSITE" id="PS50280">
    <property type="entry name" value="SET"/>
    <property type="match status" value="1"/>
</dbReference>
<reference key="1">
    <citation type="journal article" date="2001" name="Mol. Cell">
        <title>Purification and functional characterization of a histone H3-lysine 4-specific methyltransferase.</title>
        <authorList>
            <person name="Wang H."/>
            <person name="Cao R."/>
            <person name="Xia L."/>
            <person name="Erdjument-Bromage H."/>
            <person name="Borchers C."/>
            <person name="Tempst P."/>
            <person name="Zhang Y."/>
        </authorList>
    </citation>
    <scope>NUCLEOTIDE SEQUENCE [MRNA]</scope>
    <source>
        <tissue>Pancreas</tissue>
    </source>
</reference>
<reference key="2">
    <citation type="journal article" date="2003" name="DNA Res.">
        <title>Prediction of the coding sequences of mouse homologues of KIAA gene: III. The complete nucleotide sequences of 500 mouse KIAA-homologous cDNAs identified by screening of terminal sequences of cDNA clones randomly sampled from size-fractionated libraries.</title>
        <authorList>
            <person name="Okazaki N."/>
            <person name="Kikuno R."/>
            <person name="Ohara R."/>
            <person name="Inamoto S."/>
            <person name="Koseki H."/>
            <person name="Hiraoka S."/>
            <person name="Saga Y."/>
            <person name="Nagase T."/>
            <person name="Ohara O."/>
            <person name="Koga H."/>
        </authorList>
    </citation>
    <scope>NUCLEOTIDE SEQUENCE [LARGE SCALE MRNA]</scope>
    <source>
        <tissue>Embryonic tail</tissue>
    </source>
</reference>
<reference key="3">
    <citation type="journal article" date="2005" name="Science">
        <title>The transcriptional landscape of the mammalian genome.</title>
        <authorList>
            <person name="Carninci P."/>
            <person name="Kasukawa T."/>
            <person name="Katayama S."/>
            <person name="Gough J."/>
            <person name="Frith M.C."/>
            <person name="Maeda N."/>
            <person name="Oyama R."/>
            <person name="Ravasi T."/>
            <person name="Lenhard B."/>
            <person name="Wells C."/>
            <person name="Kodzius R."/>
            <person name="Shimokawa K."/>
            <person name="Bajic V.B."/>
            <person name="Brenner S.E."/>
            <person name="Batalov S."/>
            <person name="Forrest A.R."/>
            <person name="Zavolan M."/>
            <person name="Davis M.J."/>
            <person name="Wilming L.G."/>
            <person name="Aidinis V."/>
            <person name="Allen J.E."/>
            <person name="Ambesi-Impiombato A."/>
            <person name="Apweiler R."/>
            <person name="Aturaliya R.N."/>
            <person name="Bailey T.L."/>
            <person name="Bansal M."/>
            <person name="Baxter L."/>
            <person name="Beisel K.W."/>
            <person name="Bersano T."/>
            <person name="Bono H."/>
            <person name="Chalk A.M."/>
            <person name="Chiu K.P."/>
            <person name="Choudhary V."/>
            <person name="Christoffels A."/>
            <person name="Clutterbuck D.R."/>
            <person name="Crowe M.L."/>
            <person name="Dalla E."/>
            <person name="Dalrymple B.P."/>
            <person name="de Bono B."/>
            <person name="Della Gatta G."/>
            <person name="di Bernardo D."/>
            <person name="Down T."/>
            <person name="Engstrom P."/>
            <person name="Fagiolini M."/>
            <person name="Faulkner G."/>
            <person name="Fletcher C.F."/>
            <person name="Fukushima T."/>
            <person name="Furuno M."/>
            <person name="Futaki S."/>
            <person name="Gariboldi M."/>
            <person name="Georgii-Hemming P."/>
            <person name="Gingeras T.R."/>
            <person name="Gojobori T."/>
            <person name="Green R.E."/>
            <person name="Gustincich S."/>
            <person name="Harbers M."/>
            <person name="Hayashi Y."/>
            <person name="Hensch T.K."/>
            <person name="Hirokawa N."/>
            <person name="Hill D."/>
            <person name="Huminiecki L."/>
            <person name="Iacono M."/>
            <person name="Ikeo K."/>
            <person name="Iwama A."/>
            <person name="Ishikawa T."/>
            <person name="Jakt M."/>
            <person name="Kanapin A."/>
            <person name="Katoh M."/>
            <person name="Kawasawa Y."/>
            <person name="Kelso J."/>
            <person name="Kitamura H."/>
            <person name="Kitano H."/>
            <person name="Kollias G."/>
            <person name="Krishnan S.P."/>
            <person name="Kruger A."/>
            <person name="Kummerfeld S.K."/>
            <person name="Kurochkin I.V."/>
            <person name="Lareau L.F."/>
            <person name="Lazarevic D."/>
            <person name="Lipovich L."/>
            <person name="Liu J."/>
            <person name="Liuni S."/>
            <person name="McWilliam S."/>
            <person name="Madan Babu M."/>
            <person name="Madera M."/>
            <person name="Marchionni L."/>
            <person name="Matsuda H."/>
            <person name="Matsuzawa S."/>
            <person name="Miki H."/>
            <person name="Mignone F."/>
            <person name="Miyake S."/>
            <person name="Morris K."/>
            <person name="Mottagui-Tabar S."/>
            <person name="Mulder N."/>
            <person name="Nakano N."/>
            <person name="Nakauchi H."/>
            <person name="Ng P."/>
            <person name="Nilsson R."/>
            <person name="Nishiguchi S."/>
            <person name="Nishikawa S."/>
            <person name="Nori F."/>
            <person name="Ohara O."/>
            <person name="Okazaki Y."/>
            <person name="Orlando V."/>
            <person name="Pang K.C."/>
            <person name="Pavan W.J."/>
            <person name="Pavesi G."/>
            <person name="Pesole G."/>
            <person name="Petrovsky N."/>
            <person name="Piazza S."/>
            <person name="Reed J."/>
            <person name="Reid J.F."/>
            <person name="Ring B.Z."/>
            <person name="Ringwald M."/>
            <person name="Rost B."/>
            <person name="Ruan Y."/>
            <person name="Salzberg S.L."/>
            <person name="Sandelin A."/>
            <person name="Schneider C."/>
            <person name="Schoenbach C."/>
            <person name="Sekiguchi K."/>
            <person name="Semple C.A."/>
            <person name="Seno S."/>
            <person name="Sessa L."/>
            <person name="Sheng Y."/>
            <person name="Shibata Y."/>
            <person name="Shimada H."/>
            <person name="Shimada K."/>
            <person name="Silva D."/>
            <person name="Sinclair B."/>
            <person name="Sperling S."/>
            <person name="Stupka E."/>
            <person name="Sugiura K."/>
            <person name="Sultana R."/>
            <person name="Takenaka Y."/>
            <person name="Taki K."/>
            <person name="Tammoja K."/>
            <person name="Tan S.L."/>
            <person name="Tang S."/>
            <person name="Taylor M.S."/>
            <person name="Tegner J."/>
            <person name="Teichmann S.A."/>
            <person name="Ueda H.R."/>
            <person name="van Nimwegen E."/>
            <person name="Verardo R."/>
            <person name="Wei C.L."/>
            <person name="Yagi K."/>
            <person name="Yamanishi H."/>
            <person name="Zabarovsky E."/>
            <person name="Zhu S."/>
            <person name="Zimmer A."/>
            <person name="Hide W."/>
            <person name="Bult C."/>
            <person name="Grimmond S.M."/>
            <person name="Teasdale R.D."/>
            <person name="Liu E.T."/>
            <person name="Brusic V."/>
            <person name="Quackenbush J."/>
            <person name="Wahlestedt C."/>
            <person name="Mattick J.S."/>
            <person name="Hume D.A."/>
            <person name="Kai C."/>
            <person name="Sasaki D."/>
            <person name="Tomaru Y."/>
            <person name="Fukuda S."/>
            <person name="Kanamori-Katayama M."/>
            <person name="Suzuki M."/>
            <person name="Aoki J."/>
            <person name="Arakawa T."/>
            <person name="Iida J."/>
            <person name="Imamura K."/>
            <person name="Itoh M."/>
            <person name="Kato T."/>
            <person name="Kawaji H."/>
            <person name="Kawagashira N."/>
            <person name="Kawashima T."/>
            <person name="Kojima M."/>
            <person name="Kondo S."/>
            <person name="Konno H."/>
            <person name="Nakano K."/>
            <person name="Ninomiya N."/>
            <person name="Nishio T."/>
            <person name="Okada M."/>
            <person name="Plessy C."/>
            <person name="Shibata K."/>
            <person name="Shiraki T."/>
            <person name="Suzuki S."/>
            <person name="Tagami M."/>
            <person name="Waki K."/>
            <person name="Watahiki A."/>
            <person name="Okamura-Oho Y."/>
            <person name="Suzuki H."/>
            <person name="Kawai J."/>
            <person name="Hayashizaki Y."/>
        </authorList>
    </citation>
    <scope>NUCLEOTIDE SEQUENCE [LARGE SCALE MRNA]</scope>
    <source>
        <strain>C57BL/6J</strain>
        <strain>NOD</strain>
        <tissue>Brain</tissue>
        <tissue>Cerebellum</tissue>
    </source>
</reference>
<reference key="4">
    <citation type="journal article" date="2004" name="Genome Res.">
        <title>The status, quality, and expansion of the NIH full-length cDNA project: the Mammalian Gene Collection (MGC).</title>
        <authorList>
            <consortium name="The MGC Project Team"/>
        </authorList>
    </citation>
    <scope>NUCLEOTIDE SEQUENCE [LARGE SCALE MRNA]</scope>
    <source>
        <strain>129/Sv X 129SvCp</strain>
        <tissue>Embryonic stem cell</tissue>
    </source>
</reference>
<reference key="5">
    <citation type="journal article" date="2003" name="J. Biol. Chem.">
        <title>Covalent histone modifications underlie the developmental regulation of insulin gene transcription in pancreatic beta cells.</title>
        <authorList>
            <person name="Chakrabarti S.K."/>
            <person name="Francis J."/>
            <person name="Ziesmann S.M."/>
            <person name="Garmey J.C."/>
            <person name="Mirmira R.G."/>
        </authorList>
    </citation>
    <scope>FUNCTION</scope>
</reference>
<reference key="6">
    <citation type="journal article" date="2005" name="Biochem. Biophys. Res. Commun.">
        <title>The analysis of X-chromosome inactivation-related gene expression from single mouse embryo with sex-determination.</title>
        <authorList>
            <person name="Jeong K.S."/>
            <person name="Park J.H."/>
            <person name="Lee S."/>
        </authorList>
    </citation>
    <scope>DEVELOPMENTAL STAGE</scope>
</reference>
<reference key="7">
    <citation type="journal article" date="2010" name="Cell">
        <title>A tissue-specific atlas of mouse protein phosphorylation and expression.</title>
        <authorList>
            <person name="Huttlin E.L."/>
            <person name="Jedrychowski M.P."/>
            <person name="Elias J.E."/>
            <person name="Goswami T."/>
            <person name="Rad R."/>
            <person name="Beausoleil S.A."/>
            <person name="Villen J."/>
            <person name="Haas W."/>
            <person name="Sowa M.E."/>
            <person name="Gygi S.P."/>
        </authorList>
    </citation>
    <scope>IDENTIFICATION BY MASS SPECTROMETRY [LARGE SCALE ANALYSIS]</scope>
    <source>
        <tissue>Brain</tissue>
        <tissue>Lung</tissue>
        <tissue>Spleen</tissue>
    </source>
</reference>
<reference key="8">
    <citation type="journal article" date="2022" name="Bone Res.">
        <title>RIOX1-demethylated cGAS regulates ionizing radiation-elicited DNA repair.</title>
        <authorList>
            <person name="Xiao Y."/>
            <person name="Li J."/>
            <person name="Liao X."/>
            <person name="He Y."/>
            <person name="He T."/>
            <person name="Yang C."/>
            <person name="Jiang L."/>
            <person name="Jeon S.M."/>
            <person name="Lee J.H."/>
            <person name="Chen Y."/>
            <person name="Liu R."/>
            <person name="Chen Q."/>
        </authorList>
    </citation>
    <scope>FUNCTION</scope>
    <scope>CATALYTIC ACTIVITY</scope>
    <scope>MUTAGENESIS OF HIS-297</scope>
</reference>
<protein>
    <recommendedName>
        <fullName>Histone-lysine N-methyltransferase SETD7</fullName>
        <ecNumber evidence="1">2.1.1.364</ecNumber>
    </recommendedName>
    <alternativeName>
        <fullName>Histone H3-K4 methyltransferase SETD7</fullName>
        <shortName>H3-K4-HMTase SETD7</shortName>
    </alternativeName>
    <alternativeName>
        <fullName>SET domain-containing protein 7</fullName>
    </alternativeName>
    <alternativeName>
        <fullName>SET7/9</fullName>
    </alternativeName>
</protein>
<feature type="chain" id="PRO_0000186055" description="Histone-lysine N-methyltransferase SETD7">
    <location>
        <begin position="1"/>
        <end position="366"/>
    </location>
</feature>
<feature type="repeat" description="MORN 1">
    <location>
        <begin position="36"/>
        <end position="58"/>
    </location>
</feature>
<feature type="repeat" description="MORN 2">
    <location>
        <begin position="59"/>
        <end position="81"/>
    </location>
</feature>
<feature type="repeat" description="MORN 3">
    <location>
        <begin position="106"/>
        <end position="128"/>
    </location>
</feature>
<feature type="domain" description="SET" evidence="2">
    <location>
        <begin position="214"/>
        <end position="336"/>
    </location>
</feature>
<feature type="binding site" evidence="1">
    <location>
        <begin position="226"/>
        <end position="228"/>
    </location>
    <ligand>
        <name>S-adenosyl-L-methionine</name>
        <dbReference type="ChEBI" id="CHEBI:59789"/>
    </ligand>
</feature>
<feature type="binding site" evidence="1">
    <location>
        <position position="296"/>
    </location>
    <ligand>
        <name>S-adenosyl-L-methionine</name>
        <dbReference type="ChEBI" id="CHEBI:59789"/>
    </ligand>
</feature>
<feature type="binding site" evidence="1">
    <location>
        <position position="297"/>
    </location>
    <ligand>
        <name>S-adenosyl-L-methionine</name>
        <dbReference type="ChEBI" id="CHEBI:59789"/>
    </ligand>
</feature>
<feature type="binding site" evidence="1 2">
    <location>
        <position position="356"/>
    </location>
    <ligand>
        <name>S-adenosyl-L-methionine</name>
        <dbReference type="ChEBI" id="CHEBI:59789"/>
    </ligand>
</feature>
<feature type="site" description="Histone H3K4 binding" evidence="1">
    <location>
        <position position="245"/>
    </location>
</feature>
<feature type="site" description="Histone H3K4 binding" evidence="1">
    <location>
        <position position="256"/>
    </location>
</feature>
<feature type="site" description="Histone H3K4 binding" evidence="1">
    <location>
        <position position="266"/>
    </location>
</feature>
<feature type="site" description="Histone H3K4 binding" evidence="1">
    <location>
        <position position="317"/>
    </location>
</feature>
<feature type="site" description="Histone H3K4 binding" evidence="1">
    <location>
        <position position="335"/>
    </location>
</feature>
<feature type="mutagenesis site" description="Abolishes methyltransferase activity." evidence="6">
    <original>H</original>
    <variation>A</variation>
    <location>
        <position position="297"/>
    </location>
</feature>
<feature type="sequence conflict" description="In Ref. 4; AAH50190." evidence="7" ref="4">
    <original>E</original>
    <variation>V</variation>
    <location>
        <position position="77"/>
    </location>
</feature>
<feature type="sequence conflict" description="In Ref. 1; AAL56578." evidence="7" ref="1">
    <original>L</original>
    <variation>I</variation>
    <location>
        <position position="165"/>
    </location>
</feature>
<sequence>MDSDDEVVEEAVEGHLDDDGLPHGFCTVTYSSTDRFEGNFVHGEKNGRGKFFFFDGSTLEGYYVDDALQGQGVYTYEDGGVLQGTYVDGELNGPAQEYDSDGRLIFKGQYKDNNRHGVCWIHYPDGGSLVGEVNEDGEMTGEKIAYVYPDQRTALYGKFIDGEMLEGKLATLMATEEGRPHFEVTSGSSVYHFDKSTSSCISSDALLPDPYESERVYVADSLISSAGEGLFSKVAVGPNTVMSFYNGVRITHQEVDSRDWALNGNTLSLDEETVIDVPEPYNHVSKYCASLGHKANHSFTPNCVYDLFVHPRFGPIKCIRTLRAVEAEEELTVAYGYDHSPPGKSGPEAPEWYQVELKAFQATQQK</sequence>
<accession>Q8VHL1</accession>
<accession>Q6ZPJ6</accession>
<accession>Q80UU3</accession>
<accession>Q8C7Y6</accession>
<organism>
    <name type="scientific">Mus musculus</name>
    <name type="common">Mouse</name>
    <dbReference type="NCBI Taxonomy" id="10090"/>
    <lineage>
        <taxon>Eukaryota</taxon>
        <taxon>Metazoa</taxon>
        <taxon>Chordata</taxon>
        <taxon>Craniata</taxon>
        <taxon>Vertebrata</taxon>
        <taxon>Euteleostomi</taxon>
        <taxon>Mammalia</taxon>
        <taxon>Eutheria</taxon>
        <taxon>Euarchontoglires</taxon>
        <taxon>Glires</taxon>
        <taxon>Rodentia</taxon>
        <taxon>Myomorpha</taxon>
        <taxon>Muroidea</taxon>
        <taxon>Muridae</taxon>
        <taxon>Murinae</taxon>
        <taxon>Mus</taxon>
        <taxon>Mus</taxon>
    </lineage>
</organism>
<name>SETD7_MOUSE</name>
<evidence type="ECO:0000250" key="1">
    <source>
        <dbReference type="UniProtKB" id="Q8WTS6"/>
    </source>
</evidence>
<evidence type="ECO:0000255" key="2">
    <source>
        <dbReference type="PROSITE-ProRule" id="PRU00190"/>
    </source>
</evidence>
<evidence type="ECO:0000255" key="3">
    <source>
        <dbReference type="PROSITE-ProRule" id="PRU00910"/>
    </source>
</evidence>
<evidence type="ECO:0000269" key="4">
    <source>
    </source>
</evidence>
<evidence type="ECO:0000269" key="5">
    <source>
    </source>
</evidence>
<evidence type="ECO:0000269" key="6">
    <source>
    </source>
</evidence>
<evidence type="ECO:0000305" key="7"/>
<gene>
    <name type="primary">Setd7</name>
    <name type="synonym">Kiaa1717</name>
    <name type="synonym">Set7</name>
    <name type="synonym">Set9</name>
</gene>
<keyword id="KW-0010">Activator</keyword>
<keyword id="KW-0156">Chromatin regulator</keyword>
<keyword id="KW-0158">Chromosome</keyword>
<keyword id="KW-0489">Methyltransferase</keyword>
<keyword id="KW-0539">Nucleus</keyword>
<keyword id="KW-1185">Reference proteome</keyword>
<keyword id="KW-0677">Repeat</keyword>
<keyword id="KW-0949">S-adenosyl-L-methionine</keyword>
<keyword id="KW-0804">Transcription</keyword>
<keyword id="KW-0805">Transcription regulation</keyword>
<keyword id="KW-0808">Transferase</keyword>